<feature type="chain" id="PRO_0000325526" description="3-dehydroquinate dehydratase">
    <location>
        <begin position="1"/>
        <end position="251"/>
    </location>
</feature>
<feature type="active site" description="Proton donor/acceptor" evidence="1">
    <location>
        <position position="144"/>
    </location>
</feature>
<feature type="active site" description="Schiff-base intermediate with substrate" evidence="1">
    <location>
        <position position="171"/>
    </location>
</feature>
<feature type="binding site" evidence="1">
    <location>
        <begin position="47"/>
        <end position="49"/>
    </location>
    <ligand>
        <name>3-dehydroquinate</name>
        <dbReference type="ChEBI" id="CHEBI:32364"/>
    </ligand>
</feature>
<feature type="binding site" evidence="1">
    <location>
        <position position="83"/>
    </location>
    <ligand>
        <name>3-dehydroquinate</name>
        <dbReference type="ChEBI" id="CHEBI:32364"/>
    </ligand>
</feature>
<feature type="binding site" evidence="1">
    <location>
        <position position="214"/>
    </location>
    <ligand>
        <name>3-dehydroquinate</name>
        <dbReference type="ChEBI" id="CHEBI:32364"/>
    </ligand>
</feature>
<feature type="binding site" evidence="1">
    <location>
        <position position="233"/>
    </location>
    <ligand>
        <name>3-dehydroquinate</name>
        <dbReference type="ChEBI" id="CHEBI:32364"/>
    </ligand>
</feature>
<feature type="binding site" evidence="1">
    <location>
        <position position="237"/>
    </location>
    <ligand>
        <name>3-dehydroquinate</name>
        <dbReference type="ChEBI" id="CHEBI:32364"/>
    </ligand>
</feature>
<comment type="function">
    <text evidence="1">Involved in the third step of the chorismate pathway, which leads to the biosynthesis of aromatic amino acids. Catalyzes the cis-dehydration of 3-dehydroquinate (DHQ) and introduces the first double bond of the aromatic ring to yield 3-dehydroshikimate.</text>
</comment>
<comment type="catalytic activity">
    <reaction evidence="1">
        <text>3-dehydroquinate = 3-dehydroshikimate + H2O</text>
        <dbReference type="Rhea" id="RHEA:21096"/>
        <dbReference type="ChEBI" id="CHEBI:15377"/>
        <dbReference type="ChEBI" id="CHEBI:16630"/>
        <dbReference type="ChEBI" id="CHEBI:32364"/>
        <dbReference type="EC" id="4.2.1.10"/>
    </reaction>
</comment>
<comment type="pathway">
    <text evidence="1">Metabolic intermediate biosynthesis; chorismate biosynthesis; chorismate from D-erythrose 4-phosphate and phosphoenolpyruvate: step 3/7.</text>
</comment>
<comment type="subunit">
    <text evidence="1">Homodimer.</text>
</comment>
<comment type="similarity">
    <text evidence="1">Belongs to the type-I 3-dehydroquinase family.</text>
</comment>
<comment type="sequence caution" evidence="2">
    <conflict type="erroneous initiation">
        <sequence resource="EMBL-CDS" id="ABR75533"/>
    </conflict>
    <text>Extended N-terminus.</text>
</comment>
<organism>
    <name type="scientific">Klebsiella pneumoniae subsp. pneumoniae (strain ATCC 700721 / MGH 78578)</name>
    <dbReference type="NCBI Taxonomy" id="272620"/>
    <lineage>
        <taxon>Bacteria</taxon>
        <taxon>Pseudomonadati</taxon>
        <taxon>Pseudomonadota</taxon>
        <taxon>Gammaproteobacteria</taxon>
        <taxon>Enterobacterales</taxon>
        <taxon>Enterobacteriaceae</taxon>
        <taxon>Klebsiella/Raoultella group</taxon>
        <taxon>Klebsiella</taxon>
        <taxon>Klebsiella pneumoniae complex</taxon>
    </lineage>
</organism>
<reference key="1">
    <citation type="submission" date="2006-09" db="EMBL/GenBank/DDBJ databases">
        <authorList>
            <consortium name="The Klebsiella pneumonia Genome Sequencing Project"/>
            <person name="McClelland M."/>
            <person name="Sanderson E.K."/>
            <person name="Spieth J."/>
            <person name="Clifton W.S."/>
            <person name="Latreille P."/>
            <person name="Sabo A."/>
            <person name="Pepin K."/>
            <person name="Bhonagiri V."/>
            <person name="Porwollik S."/>
            <person name="Ali J."/>
            <person name="Wilson R.K."/>
        </authorList>
    </citation>
    <scope>NUCLEOTIDE SEQUENCE [LARGE SCALE GENOMIC DNA]</scope>
    <source>
        <strain>ATCC 700721 / MGH 78578</strain>
    </source>
</reference>
<evidence type="ECO:0000255" key="1">
    <source>
        <dbReference type="HAMAP-Rule" id="MF_00214"/>
    </source>
</evidence>
<evidence type="ECO:0000305" key="2"/>
<dbReference type="EC" id="4.2.1.10" evidence="1"/>
<dbReference type="EMBL" id="CP000647">
    <property type="protein sequence ID" value="ABR75533.1"/>
    <property type="status" value="ALT_INIT"/>
    <property type="molecule type" value="Genomic_DNA"/>
</dbReference>
<dbReference type="RefSeq" id="WP_004177420.1">
    <property type="nucleotide sequence ID" value="NC_009648.1"/>
</dbReference>
<dbReference type="SMR" id="A6T4L2"/>
<dbReference type="STRING" id="272620.KPN_00073"/>
<dbReference type="jPOST" id="A6T4L2"/>
<dbReference type="PaxDb" id="272620-KPN_00073"/>
<dbReference type="EnsemblBacteria" id="ABR75533">
    <property type="protein sequence ID" value="ABR75533"/>
    <property type="gene ID" value="KPN_00073"/>
</dbReference>
<dbReference type="KEGG" id="kpn:KPN_00073"/>
<dbReference type="HOGENOM" id="CLU_064444_0_0_6"/>
<dbReference type="UniPathway" id="UPA00053">
    <property type="reaction ID" value="UER00086"/>
</dbReference>
<dbReference type="Proteomes" id="UP000000265">
    <property type="component" value="Chromosome"/>
</dbReference>
<dbReference type="GO" id="GO:0003855">
    <property type="term" value="F:3-dehydroquinate dehydratase activity"/>
    <property type="evidence" value="ECO:0007669"/>
    <property type="project" value="UniProtKB-UniRule"/>
</dbReference>
<dbReference type="GO" id="GO:0046279">
    <property type="term" value="P:3,4-dihydroxybenzoate biosynthetic process"/>
    <property type="evidence" value="ECO:0007669"/>
    <property type="project" value="TreeGrafter"/>
</dbReference>
<dbReference type="GO" id="GO:0008652">
    <property type="term" value="P:amino acid biosynthetic process"/>
    <property type="evidence" value="ECO:0007669"/>
    <property type="project" value="UniProtKB-KW"/>
</dbReference>
<dbReference type="GO" id="GO:0009073">
    <property type="term" value="P:aromatic amino acid family biosynthetic process"/>
    <property type="evidence" value="ECO:0007669"/>
    <property type="project" value="UniProtKB-KW"/>
</dbReference>
<dbReference type="GO" id="GO:0009423">
    <property type="term" value="P:chorismate biosynthetic process"/>
    <property type="evidence" value="ECO:0007669"/>
    <property type="project" value="UniProtKB-UniRule"/>
</dbReference>
<dbReference type="CDD" id="cd00502">
    <property type="entry name" value="DHQase_I"/>
    <property type="match status" value="1"/>
</dbReference>
<dbReference type="FunFam" id="3.20.20.70:FF:000047">
    <property type="entry name" value="3-dehydroquinate dehydratase"/>
    <property type="match status" value="1"/>
</dbReference>
<dbReference type="Gene3D" id="3.20.20.70">
    <property type="entry name" value="Aldolase class I"/>
    <property type="match status" value="1"/>
</dbReference>
<dbReference type="HAMAP" id="MF_00214">
    <property type="entry name" value="AroD"/>
    <property type="match status" value="1"/>
</dbReference>
<dbReference type="InterPro" id="IPR018508">
    <property type="entry name" value="3-dehydroquinate_DH_AS"/>
</dbReference>
<dbReference type="InterPro" id="IPR013785">
    <property type="entry name" value="Aldolase_TIM"/>
</dbReference>
<dbReference type="InterPro" id="IPR001381">
    <property type="entry name" value="DHquinase_I"/>
</dbReference>
<dbReference type="InterPro" id="IPR050146">
    <property type="entry name" value="Type-I_3-dehydroquinase"/>
</dbReference>
<dbReference type="NCBIfam" id="TIGR01093">
    <property type="entry name" value="aroD"/>
    <property type="match status" value="1"/>
</dbReference>
<dbReference type="PANTHER" id="PTHR43699">
    <property type="entry name" value="3-DEHYDROQUINATE DEHYDRATASE"/>
    <property type="match status" value="1"/>
</dbReference>
<dbReference type="PANTHER" id="PTHR43699:SF1">
    <property type="entry name" value="3-DEHYDROQUINATE DEHYDRATASE"/>
    <property type="match status" value="1"/>
</dbReference>
<dbReference type="Pfam" id="PF01487">
    <property type="entry name" value="DHquinase_I"/>
    <property type="match status" value="1"/>
</dbReference>
<dbReference type="SUPFAM" id="SSF51569">
    <property type="entry name" value="Aldolase"/>
    <property type="match status" value="1"/>
</dbReference>
<dbReference type="PROSITE" id="PS01028">
    <property type="entry name" value="DEHYDROQUINASE_I"/>
    <property type="match status" value="1"/>
</dbReference>
<name>AROD_KLEP7</name>
<sequence>MTNAVTVKNITFQEGETLICVPLIGKTLDEILGNAHGLVDAGADIIEWRVDHFAQVREMAQVMAALAEIRGALKALPLLFTFRSKKEGGETELSDEAYFALNREAARSGLVDVIDIELFNDEAQIRALVDDAHAAGVKVIMSNHDFHKTPAQEDIIYRLRRMQDLGADLPKIAVMPQSPQDVLTLLAATLTMKEKYATRPLITMSMGKSGGVSRVTGRLFGSAMTFGTVGQASAPGQIAIAKLREVMDILS</sequence>
<protein>
    <recommendedName>
        <fullName evidence="1">3-dehydroquinate dehydratase</fullName>
        <shortName evidence="1">3-dehydroquinase</shortName>
        <ecNumber evidence="1">4.2.1.10</ecNumber>
    </recommendedName>
    <alternativeName>
        <fullName evidence="1">Type I DHQase</fullName>
    </alternativeName>
    <alternativeName>
        <fullName evidence="1">Type I dehydroquinase</fullName>
        <shortName evidence="1">DHQ1</shortName>
    </alternativeName>
</protein>
<proteinExistence type="inferred from homology"/>
<gene>
    <name evidence="1" type="primary">aroD</name>
    <name type="ordered locus">KPN78578_00720</name>
    <name type="ORF">KPN_00073</name>
</gene>
<keyword id="KW-0028">Amino-acid biosynthesis</keyword>
<keyword id="KW-0057">Aromatic amino acid biosynthesis</keyword>
<keyword id="KW-0456">Lyase</keyword>
<keyword id="KW-0704">Schiff base</keyword>
<accession>A6T4L2</accession>